<gene>
    <name evidence="1" type="primary">yejK</name>
    <name type="ordered locus">ECDH10B_2344</name>
</gene>
<comment type="subcellular location">
    <subcellularLocation>
        <location evidence="1">Cytoplasm</location>
        <location evidence="1">Nucleoid</location>
    </subcellularLocation>
</comment>
<comment type="similarity">
    <text evidence="1">Belongs to the YejK family.</text>
</comment>
<protein>
    <recommendedName>
        <fullName evidence="1">Nucleoid-associated protein YejK</fullName>
    </recommendedName>
</protein>
<proteinExistence type="inferred from homology"/>
<dbReference type="EMBL" id="CP000948">
    <property type="protein sequence ID" value="ACB03350.1"/>
    <property type="molecule type" value="Genomic_DNA"/>
</dbReference>
<dbReference type="RefSeq" id="WP_000050793.1">
    <property type="nucleotide sequence ID" value="NC_010473.1"/>
</dbReference>
<dbReference type="SMR" id="B1X884"/>
<dbReference type="KEGG" id="ecd:ECDH10B_2344"/>
<dbReference type="HOGENOM" id="CLU_063050_0_1_6"/>
<dbReference type="GO" id="GO:0043590">
    <property type="term" value="C:bacterial nucleoid"/>
    <property type="evidence" value="ECO:0007669"/>
    <property type="project" value="TreeGrafter"/>
</dbReference>
<dbReference type="GO" id="GO:0005737">
    <property type="term" value="C:cytoplasm"/>
    <property type="evidence" value="ECO:0007669"/>
    <property type="project" value="UniProtKB-UniRule"/>
</dbReference>
<dbReference type="GO" id="GO:0003690">
    <property type="term" value="F:double-stranded DNA binding"/>
    <property type="evidence" value="ECO:0007669"/>
    <property type="project" value="TreeGrafter"/>
</dbReference>
<dbReference type="GO" id="GO:0003727">
    <property type="term" value="F:single-stranded RNA binding"/>
    <property type="evidence" value="ECO:0007669"/>
    <property type="project" value="TreeGrafter"/>
</dbReference>
<dbReference type="HAMAP" id="MF_00730">
    <property type="entry name" value="NdpA"/>
    <property type="match status" value="1"/>
</dbReference>
<dbReference type="InterPro" id="IPR007358">
    <property type="entry name" value="Nucleoid_associated_NdpA"/>
</dbReference>
<dbReference type="NCBIfam" id="NF001557">
    <property type="entry name" value="PRK00378.1"/>
    <property type="match status" value="1"/>
</dbReference>
<dbReference type="PANTHER" id="PTHR38772">
    <property type="match status" value="1"/>
</dbReference>
<dbReference type="PANTHER" id="PTHR38772:SF1">
    <property type="entry name" value="NUCLEOID-ASSOCIATED PROTEIN YEJK"/>
    <property type="match status" value="1"/>
</dbReference>
<dbReference type="Pfam" id="PF04245">
    <property type="entry name" value="NA37"/>
    <property type="match status" value="1"/>
</dbReference>
<name>NDPA_ECODH</name>
<sequence length="335" mass="37823">MSLDINQIALHQLIKRDEQNLELVLRDSLLEPTETVVEMVAELHRVYSAKNKAYGLFSEESELAQTLRLQRQGEEDFLAFSRAATGRLRDELAKYPFADGGFVLFCHYRYLAVEYLLVAVLSNLSSMRVNENLDINPTHYLDINHADIVARIDLTEWETNPESTRYLTFLKGRVGRKVADFFMDFLGASEGLNAKAQNRGLLQAVDDFTAEAQLDKAERQNVRQQVYSYCNEQLQAGEEIELKSLSKELAGVSEVSFTEFAAEKGYELEESFPADRSTLRQLTKFAGSGGGLTINFDAMLLGERIFWDPATDTLTIKGTPPNLRDQLQRRTSGGN</sequence>
<reference key="1">
    <citation type="journal article" date="2008" name="J. Bacteriol.">
        <title>The complete genome sequence of Escherichia coli DH10B: insights into the biology of a laboratory workhorse.</title>
        <authorList>
            <person name="Durfee T."/>
            <person name="Nelson R."/>
            <person name="Baldwin S."/>
            <person name="Plunkett G. III"/>
            <person name="Burland V."/>
            <person name="Mau B."/>
            <person name="Petrosino J.F."/>
            <person name="Qin X."/>
            <person name="Muzny D.M."/>
            <person name="Ayele M."/>
            <person name="Gibbs R.A."/>
            <person name="Csorgo B."/>
            <person name="Posfai G."/>
            <person name="Weinstock G.M."/>
            <person name="Blattner F.R."/>
        </authorList>
    </citation>
    <scope>NUCLEOTIDE SEQUENCE [LARGE SCALE GENOMIC DNA]</scope>
    <source>
        <strain>K12 / DH10B</strain>
    </source>
</reference>
<evidence type="ECO:0000255" key="1">
    <source>
        <dbReference type="HAMAP-Rule" id="MF_00730"/>
    </source>
</evidence>
<organism>
    <name type="scientific">Escherichia coli (strain K12 / DH10B)</name>
    <dbReference type="NCBI Taxonomy" id="316385"/>
    <lineage>
        <taxon>Bacteria</taxon>
        <taxon>Pseudomonadati</taxon>
        <taxon>Pseudomonadota</taxon>
        <taxon>Gammaproteobacteria</taxon>
        <taxon>Enterobacterales</taxon>
        <taxon>Enterobacteriaceae</taxon>
        <taxon>Escherichia</taxon>
    </lineage>
</organism>
<feature type="chain" id="PRO_1000191554" description="Nucleoid-associated protein YejK">
    <location>
        <begin position="1"/>
        <end position="335"/>
    </location>
</feature>
<keyword id="KW-0963">Cytoplasm</keyword>
<accession>B1X884</accession>